<comment type="function">
    <text evidence="1">Sugar isomerase that catalyzes the reversible isomerization of D-lyxose to D-xylulose (PubMed:34422783). Is highly specific for the substrate D-lyxose, showing less than 2% activity towards mannose and other substrates reported for lyxose isomerases (PubMed:34422783).</text>
</comment>
<comment type="catalytic activity">
    <reaction evidence="1">
        <text>D-lyxose = D-xylulose</text>
        <dbReference type="Rhea" id="RHEA:14201"/>
        <dbReference type="ChEBI" id="CHEBI:16789"/>
        <dbReference type="ChEBI" id="CHEBI:17140"/>
        <dbReference type="EC" id="5.3.1.15"/>
    </reaction>
</comment>
<comment type="cofactor">
    <cofactor evidence="1">
        <name>Mn(2+)</name>
        <dbReference type="ChEBI" id="CHEBI:29035"/>
    </cofactor>
    <text evidence="1">Shows highest activity with Mn(2+). The Mn(2+) ions can be effectively replaced by Co(2+) ions. Shows less activity with other divalent metal ions such as Fe(2+), Ca(2+) and Mg(2+).</text>
</comment>
<comment type="biophysicochemical properties">
    <kinetics>
        <KM evidence="1">74 mM for D-lyxose</KM>
        <KM evidence="1">0.4 mM for Mn(2+)</KM>
        <Vmax evidence="1">338.0 umol/min/mg enzyme</Vmax>
    </kinetics>
    <temperatureDependence>
        <text evidence="1">Optimum temperature is higher than 95 degrees Celsius. Retains 60% of its activity after 60 minutes incubation at 80 degrees Celsius.</text>
    </temperatureDependence>
</comment>
<comment type="subunit">
    <text evidence="1">Homodimer; disulfide-linked (PubMed:34422783). Stabilized by a disulfide bond between the two monomers of the dimeric enzyme and increased hydrophobicity at the dimer interface (PubMed:34422783).</text>
</comment>
<comment type="biotechnology">
    <text evidence="1">High substrate specificity, thermostability and solvent tolerance make this lyxose isomerase enzyme a good candidate for potential industrial applications.</text>
</comment>
<comment type="similarity">
    <text evidence="3">Belongs to the D-lyxose ketol-isomerase family.</text>
</comment>
<evidence type="ECO:0000269" key="1">
    <source>
    </source>
</evidence>
<evidence type="ECO:0000303" key="2">
    <source>
    </source>
</evidence>
<evidence type="ECO:0000305" key="3"/>
<evidence type="ECO:0000312" key="4">
    <source>
        <dbReference type="EMBL" id="OYT29093.1"/>
    </source>
</evidence>
<evidence type="ECO:0007744" key="5">
    <source>
        <dbReference type="PDB" id="7NZO"/>
    </source>
</evidence>
<evidence type="ECO:0007744" key="6">
    <source>
        <dbReference type="PDB" id="7NZP"/>
    </source>
</evidence>
<evidence type="ECO:0007744" key="7">
    <source>
        <dbReference type="PDB" id="7NZQ"/>
    </source>
</evidence>
<feature type="chain" id="PRO_0000455822" description="D-lyxose ketol-isomerase">
    <location>
        <begin position="1"/>
        <end position="180"/>
    </location>
</feature>
<feature type="binding site" evidence="1 6">
    <location>
        <position position="62"/>
    </location>
    <ligand>
        <name>D-fructose</name>
        <dbReference type="ChEBI" id="CHEBI:37721"/>
    </ligand>
</feature>
<feature type="binding site" evidence="1 5 6 7">
    <location>
        <position position="75"/>
    </location>
    <ligand>
        <name>Mn(2+)</name>
        <dbReference type="ChEBI" id="CHEBI:29035"/>
    </ligand>
</feature>
<feature type="binding site" evidence="1 5 6 7">
    <location>
        <position position="77"/>
    </location>
    <ligand>
        <name>Mn(2+)</name>
        <dbReference type="ChEBI" id="CHEBI:29035"/>
    </ligand>
</feature>
<feature type="binding site" evidence="1 6">
    <location>
        <position position="86"/>
    </location>
    <ligand>
        <name>D-fructose</name>
        <dbReference type="ChEBI" id="CHEBI:37721"/>
    </ligand>
</feature>
<feature type="binding site" evidence="1 5 6 7">
    <location>
        <position position="88"/>
    </location>
    <ligand>
        <name>Mn(2+)</name>
        <dbReference type="ChEBI" id="CHEBI:29035"/>
    </ligand>
</feature>
<feature type="binding site" evidence="1 5 6 7">
    <location>
        <position position="143"/>
    </location>
    <ligand>
        <name>Mn(2+)</name>
        <dbReference type="ChEBI" id="CHEBI:29035"/>
    </ligand>
</feature>
<feature type="binding site" evidence="1 6">
    <location>
        <position position="156"/>
    </location>
    <ligand>
        <name>D-fructose</name>
        <dbReference type="ChEBI" id="CHEBI:37721"/>
    </ligand>
</feature>
<feature type="binding site" evidence="1 6">
    <location>
        <position position="166"/>
    </location>
    <ligand>
        <name>D-fructose</name>
        <dbReference type="ChEBI" id="CHEBI:37721"/>
    </ligand>
</feature>
<feature type="binding site" evidence="1 6">
    <location>
        <position position="175"/>
    </location>
    <ligand>
        <name>D-fructose</name>
        <dbReference type="ChEBI" id="CHEBI:37721"/>
    </ligand>
</feature>
<feature type="disulfide bond" description="Interchain" evidence="1 5 6">
    <location>
        <position position="22"/>
    </location>
</feature>
<accession>A0A256XLS3</accession>
<organism>
    <name type="scientific">Thermofilum sp. (strain ex4484_79)</name>
    <dbReference type="NCBI Taxonomy" id="2012527"/>
    <lineage>
        <taxon>Archaea</taxon>
        <taxon>Thermoproteota</taxon>
        <taxon>Thermoprotei</taxon>
        <taxon>Thermofilales</taxon>
        <taxon>Thermofilaceae</taxon>
        <taxon>Thermofilum</taxon>
    </lineage>
</organism>
<sequence>MLTKELVKEAREKAIRMLEKACIAITDEEKEKIEVTDFGLGVLYTFGLEILVYVNNERYCAKELVMFPRQICPEHRHPPIGSYLGKQETFRCRWGEVYLYVPGTPTPNPRARIPEEKKRYFTVWHEIVLRPGEQYTIPPNTLHWFQAGDEGAIVSEFSSQSIDEKDIFTDPNVKRIPEIV</sequence>
<gene>
    <name evidence="4" type="ORF">B6U94_07925</name>
</gene>
<name>DLYKI_THEX4</name>
<dbReference type="EC" id="5.3.1.15" evidence="1"/>
<dbReference type="EMBL" id="NJDK01000115">
    <property type="protein sequence ID" value="OYT29093.1"/>
    <property type="molecule type" value="Genomic_DNA"/>
</dbReference>
<dbReference type="PDB" id="7NZO">
    <property type="method" value="X-ray"/>
    <property type="resolution" value="1.67 A"/>
    <property type="chains" value="AAA/BBB=1-180"/>
</dbReference>
<dbReference type="PDB" id="7NZP">
    <property type="method" value="X-ray"/>
    <property type="resolution" value="1.34 A"/>
    <property type="chains" value="AAA/BBB=1-180"/>
</dbReference>
<dbReference type="PDB" id="7NZQ">
    <property type="method" value="X-ray"/>
    <property type="resolution" value="1.57 A"/>
    <property type="chains" value="AAA=1-180"/>
</dbReference>
<dbReference type="PDBsum" id="7NZO"/>
<dbReference type="PDBsum" id="7NZP"/>
<dbReference type="PDBsum" id="7NZQ"/>
<dbReference type="SMR" id="A0A256XLS3"/>
<dbReference type="Proteomes" id="UP000216408">
    <property type="component" value="Unassembled WGS sequence"/>
</dbReference>
<dbReference type="GO" id="GO:0016853">
    <property type="term" value="F:isomerase activity"/>
    <property type="evidence" value="ECO:0007669"/>
    <property type="project" value="UniProtKB-KW"/>
</dbReference>
<dbReference type="GO" id="GO:0046872">
    <property type="term" value="F:metal ion binding"/>
    <property type="evidence" value="ECO:0007669"/>
    <property type="project" value="UniProtKB-KW"/>
</dbReference>
<dbReference type="CDD" id="cd20308">
    <property type="entry name" value="cupin_YdaE"/>
    <property type="match status" value="1"/>
</dbReference>
<dbReference type="Gene3D" id="2.60.120.10">
    <property type="entry name" value="Jelly Rolls"/>
    <property type="match status" value="1"/>
</dbReference>
<dbReference type="InterPro" id="IPR014710">
    <property type="entry name" value="RmlC-like_jellyroll"/>
</dbReference>
<dbReference type="InterPro" id="IPR011051">
    <property type="entry name" value="RmlC_Cupin_sf"/>
</dbReference>
<dbReference type="SUPFAM" id="SSF51182">
    <property type="entry name" value="RmlC-like cupins"/>
    <property type="match status" value="1"/>
</dbReference>
<keyword id="KW-0002">3D-structure</keyword>
<keyword id="KW-0119">Carbohydrate metabolism</keyword>
<keyword id="KW-1015">Disulfide bond</keyword>
<keyword id="KW-0413">Isomerase</keyword>
<keyword id="KW-0464">Manganese</keyword>
<keyword id="KW-0479">Metal-binding</keyword>
<protein>
    <recommendedName>
        <fullName evidence="3">D-lyxose ketol-isomerase</fullName>
        <ecNumber evidence="1">5.3.1.15</ecNumber>
    </recommendedName>
    <alternativeName>
        <fullName evidence="2">D-lyxose isomerase</fullName>
    </alternativeName>
</protein>
<reference key="1">
    <citation type="journal article" date="2017" name="Microbiome">
        <title>Genomic insights into potential interdependencies in microbial hydrocarbon and nutrient cycling in hydrothermal sediments.</title>
        <authorList>
            <person name="Dombrowski N."/>
            <person name="Seitz K.W."/>
            <person name="Teske A.P."/>
            <person name="Baker B.J."/>
        </authorList>
    </citation>
    <scope>NUCLEOTIDE SEQUENCE [LARGE SCALE GENOMIC DNA]</scope>
    <source>
        <strain>ex4484_79</strain>
    </source>
</reference>
<reference evidence="5 6 7" key="2">
    <citation type="journal article" date="2021" name="Front. Bioeng. Biotechnol.">
        <title>Biochemical and structural characterisation of a novel D-lyxose isomerase from the hyperthermophilic archaeon Thermofilum sp.</title>
        <authorList>
            <person name="De Rose S.A."/>
            <person name="Kuprat T."/>
            <person name="Isupov M.N."/>
            <person name="Reinhardt A."/>
            <person name="Schonheit P."/>
            <person name="Littlechild J.A."/>
        </authorList>
    </citation>
    <scope>X-RAY CRYSTALLOGRAPHY (1.34 ANGSTROMS) IN COMPLEXES WITH MANGANESE; D-FRUCTOSE AND D-MANNOSE</scope>
    <scope>FUNCTION</scope>
    <scope>CATALYTIC ACTIVITY</scope>
    <scope>COFACTOR</scope>
    <scope>BIOPHYSICOCHEMICAL PROPERTIES</scope>
    <scope>SUBUNIT</scope>
    <scope>BIOTECHNOLOGY</scope>
    <scope>DISULFIDE BOND</scope>
    <source>
        <strain>ex4484_79</strain>
    </source>
</reference>
<proteinExistence type="evidence at protein level"/>